<organism>
    <name type="scientific">Arabidopsis thaliana</name>
    <name type="common">Mouse-ear cress</name>
    <dbReference type="NCBI Taxonomy" id="3702"/>
    <lineage>
        <taxon>Eukaryota</taxon>
        <taxon>Viridiplantae</taxon>
        <taxon>Streptophyta</taxon>
        <taxon>Embryophyta</taxon>
        <taxon>Tracheophyta</taxon>
        <taxon>Spermatophyta</taxon>
        <taxon>Magnoliopsida</taxon>
        <taxon>eudicotyledons</taxon>
        <taxon>Gunneridae</taxon>
        <taxon>Pentapetalae</taxon>
        <taxon>rosids</taxon>
        <taxon>malvids</taxon>
        <taxon>Brassicales</taxon>
        <taxon>Brassicaceae</taxon>
        <taxon>Camelineae</taxon>
        <taxon>Arabidopsis</taxon>
    </lineage>
</organism>
<gene>
    <name evidence="4" type="primary">CP33</name>
    <name evidence="5" type="synonym">PDE322</name>
    <name evidence="6" type="ordered locus">At3g52380</name>
    <name evidence="7" type="ORF">F22O6_240</name>
</gene>
<reference key="1">
    <citation type="journal article" date="1995" name="Plant Mol. Biol.">
        <title>Three types of nuclear genes encoding chloroplast RNA-binding proteins (cp29, cp31 and cp33) are present in Arabidopsis thaliana: presence of cp31 in chloroplasts and its homologue in nuclei/cytoplasms.</title>
        <authorList>
            <person name="Ohta M."/>
            <person name="Sugita M."/>
            <person name="Sugiura M."/>
        </authorList>
    </citation>
    <scope>NUCLEOTIDE SEQUENCE [GENOMIC DNA / MRNA]</scope>
</reference>
<reference key="2">
    <citation type="journal article" date="2000" name="Nature">
        <title>Sequence and analysis of chromosome 3 of the plant Arabidopsis thaliana.</title>
        <authorList>
            <person name="Salanoubat M."/>
            <person name="Lemcke K."/>
            <person name="Rieger M."/>
            <person name="Ansorge W."/>
            <person name="Unseld M."/>
            <person name="Fartmann B."/>
            <person name="Valle G."/>
            <person name="Bloecker H."/>
            <person name="Perez-Alonso M."/>
            <person name="Obermaier B."/>
            <person name="Delseny M."/>
            <person name="Boutry M."/>
            <person name="Grivell L.A."/>
            <person name="Mache R."/>
            <person name="Puigdomenech P."/>
            <person name="De Simone V."/>
            <person name="Choisne N."/>
            <person name="Artiguenave F."/>
            <person name="Robert C."/>
            <person name="Brottier P."/>
            <person name="Wincker P."/>
            <person name="Cattolico L."/>
            <person name="Weissenbach J."/>
            <person name="Saurin W."/>
            <person name="Quetier F."/>
            <person name="Schaefer M."/>
            <person name="Mueller-Auer S."/>
            <person name="Gabel C."/>
            <person name="Fuchs M."/>
            <person name="Benes V."/>
            <person name="Wurmbach E."/>
            <person name="Drzonek H."/>
            <person name="Erfle H."/>
            <person name="Jordan N."/>
            <person name="Bangert S."/>
            <person name="Wiedelmann R."/>
            <person name="Kranz H."/>
            <person name="Voss H."/>
            <person name="Holland R."/>
            <person name="Brandt P."/>
            <person name="Nyakatura G."/>
            <person name="Vezzi A."/>
            <person name="D'Angelo M."/>
            <person name="Pallavicini A."/>
            <person name="Toppo S."/>
            <person name="Simionati B."/>
            <person name="Conrad A."/>
            <person name="Hornischer K."/>
            <person name="Kauer G."/>
            <person name="Loehnert T.-H."/>
            <person name="Nordsiek G."/>
            <person name="Reichelt J."/>
            <person name="Scharfe M."/>
            <person name="Schoen O."/>
            <person name="Bargues M."/>
            <person name="Terol J."/>
            <person name="Climent J."/>
            <person name="Navarro P."/>
            <person name="Collado C."/>
            <person name="Perez-Perez A."/>
            <person name="Ottenwaelder B."/>
            <person name="Duchemin D."/>
            <person name="Cooke R."/>
            <person name="Laudie M."/>
            <person name="Berger-Llauro C."/>
            <person name="Purnelle B."/>
            <person name="Masuy D."/>
            <person name="de Haan M."/>
            <person name="Maarse A.C."/>
            <person name="Alcaraz J.-P."/>
            <person name="Cottet A."/>
            <person name="Casacuberta E."/>
            <person name="Monfort A."/>
            <person name="Argiriou A."/>
            <person name="Flores M."/>
            <person name="Liguori R."/>
            <person name="Vitale D."/>
            <person name="Mannhaupt G."/>
            <person name="Haase D."/>
            <person name="Schoof H."/>
            <person name="Rudd S."/>
            <person name="Zaccaria P."/>
            <person name="Mewes H.-W."/>
            <person name="Mayer K.F.X."/>
            <person name="Kaul S."/>
            <person name="Town C.D."/>
            <person name="Koo H.L."/>
            <person name="Tallon L.J."/>
            <person name="Jenkins J."/>
            <person name="Rooney T."/>
            <person name="Rizzo M."/>
            <person name="Walts A."/>
            <person name="Utterback T."/>
            <person name="Fujii C.Y."/>
            <person name="Shea T.P."/>
            <person name="Creasy T.H."/>
            <person name="Haas B."/>
            <person name="Maiti R."/>
            <person name="Wu D."/>
            <person name="Peterson J."/>
            <person name="Van Aken S."/>
            <person name="Pai G."/>
            <person name="Militscher J."/>
            <person name="Sellers P."/>
            <person name="Gill J.E."/>
            <person name="Feldblyum T.V."/>
            <person name="Preuss D."/>
            <person name="Lin X."/>
            <person name="Nierman W.C."/>
            <person name="Salzberg S.L."/>
            <person name="White O."/>
            <person name="Venter J.C."/>
            <person name="Fraser C.M."/>
            <person name="Kaneko T."/>
            <person name="Nakamura Y."/>
            <person name="Sato S."/>
            <person name="Kato T."/>
            <person name="Asamizu E."/>
            <person name="Sasamoto S."/>
            <person name="Kimura T."/>
            <person name="Idesawa K."/>
            <person name="Kawashima K."/>
            <person name="Kishida Y."/>
            <person name="Kiyokawa C."/>
            <person name="Kohara M."/>
            <person name="Matsumoto M."/>
            <person name="Matsuno A."/>
            <person name="Muraki A."/>
            <person name="Nakayama S."/>
            <person name="Nakazaki N."/>
            <person name="Shinpo S."/>
            <person name="Takeuchi C."/>
            <person name="Wada T."/>
            <person name="Watanabe A."/>
            <person name="Yamada M."/>
            <person name="Yasuda M."/>
            <person name="Tabata S."/>
        </authorList>
    </citation>
    <scope>NUCLEOTIDE SEQUENCE [LARGE SCALE GENOMIC DNA]</scope>
    <source>
        <strain>cv. Columbia</strain>
    </source>
</reference>
<reference key="3">
    <citation type="journal article" date="2017" name="Plant J.">
        <title>Araport11: a complete reannotation of the Arabidopsis thaliana reference genome.</title>
        <authorList>
            <person name="Cheng C.Y."/>
            <person name="Krishnakumar V."/>
            <person name="Chan A.P."/>
            <person name="Thibaud-Nissen F."/>
            <person name="Schobel S."/>
            <person name="Town C.D."/>
        </authorList>
    </citation>
    <scope>GENOME REANNOTATION</scope>
    <source>
        <strain>cv. Columbia</strain>
    </source>
</reference>
<reference key="4">
    <citation type="journal article" date="2003" name="Science">
        <title>Empirical analysis of transcriptional activity in the Arabidopsis genome.</title>
        <authorList>
            <person name="Yamada K."/>
            <person name="Lim J."/>
            <person name="Dale J.M."/>
            <person name="Chen H."/>
            <person name="Shinn P."/>
            <person name="Palm C.J."/>
            <person name="Southwick A.M."/>
            <person name="Wu H.C."/>
            <person name="Kim C.J."/>
            <person name="Nguyen M."/>
            <person name="Pham P.K."/>
            <person name="Cheuk R.F."/>
            <person name="Karlin-Newmann G."/>
            <person name="Liu S.X."/>
            <person name="Lam B."/>
            <person name="Sakano H."/>
            <person name="Wu T."/>
            <person name="Yu G."/>
            <person name="Miranda M."/>
            <person name="Quach H.L."/>
            <person name="Tripp M."/>
            <person name="Chang C.H."/>
            <person name="Lee J.M."/>
            <person name="Toriumi M.J."/>
            <person name="Chan M.M."/>
            <person name="Tang C.C."/>
            <person name="Onodera C.S."/>
            <person name="Deng J.M."/>
            <person name="Akiyama K."/>
            <person name="Ansari Y."/>
            <person name="Arakawa T."/>
            <person name="Banh J."/>
            <person name="Banno F."/>
            <person name="Bowser L."/>
            <person name="Brooks S.Y."/>
            <person name="Carninci P."/>
            <person name="Chao Q."/>
            <person name="Choy N."/>
            <person name="Enju A."/>
            <person name="Goldsmith A.D."/>
            <person name="Gurjal M."/>
            <person name="Hansen N.F."/>
            <person name="Hayashizaki Y."/>
            <person name="Johnson-Hopson C."/>
            <person name="Hsuan V.W."/>
            <person name="Iida K."/>
            <person name="Karnes M."/>
            <person name="Khan S."/>
            <person name="Koesema E."/>
            <person name="Ishida J."/>
            <person name="Jiang P.X."/>
            <person name="Jones T."/>
            <person name="Kawai J."/>
            <person name="Kamiya A."/>
            <person name="Meyers C."/>
            <person name="Nakajima M."/>
            <person name="Narusaka M."/>
            <person name="Seki M."/>
            <person name="Sakurai T."/>
            <person name="Satou M."/>
            <person name="Tamse R."/>
            <person name="Vaysberg M."/>
            <person name="Wallender E.K."/>
            <person name="Wong C."/>
            <person name="Yamamura Y."/>
            <person name="Yuan S."/>
            <person name="Shinozaki K."/>
            <person name="Davis R.W."/>
            <person name="Theologis A."/>
            <person name="Ecker J.R."/>
        </authorList>
    </citation>
    <scope>NUCLEOTIDE SEQUENCE [LARGE SCALE MRNA]</scope>
    <source>
        <strain>cv. Columbia</strain>
    </source>
</reference>
<reference key="5">
    <citation type="submission" date="2002-03" db="EMBL/GenBank/DDBJ databases">
        <title>Full-length cDNA from Arabidopsis thaliana.</title>
        <authorList>
            <person name="Brover V.V."/>
            <person name="Troukhan M.E."/>
            <person name="Alexandrov N.A."/>
            <person name="Lu Y.-P."/>
            <person name="Flavell R.B."/>
            <person name="Feldmann K.A."/>
        </authorList>
    </citation>
    <scope>NUCLEOTIDE SEQUENCE [LARGE SCALE MRNA]</scope>
</reference>
<proteinExistence type="evidence at transcript level"/>
<comment type="function">
    <text evidence="5">Could be involved in splicing and/or processing of chloroplast RNAs.</text>
</comment>
<comment type="subcellular location">
    <subcellularLocation>
        <location evidence="1">Plastid</location>
        <location evidence="1">Chloroplast</location>
    </subcellularLocation>
</comment>
<evidence type="ECO:0000255" key="1"/>
<evidence type="ECO:0000255" key="2">
    <source>
        <dbReference type="PROSITE-ProRule" id="PRU00176"/>
    </source>
</evidence>
<evidence type="ECO:0000256" key="3">
    <source>
        <dbReference type="SAM" id="MobiDB-lite"/>
    </source>
</evidence>
<evidence type="ECO:0000303" key="4">
    <source>
    </source>
</evidence>
<evidence type="ECO:0000305" key="5"/>
<evidence type="ECO:0000312" key="6">
    <source>
        <dbReference type="Araport" id="AT3G52380"/>
    </source>
</evidence>
<evidence type="ECO:0000312" key="7">
    <source>
        <dbReference type="EMBL" id="CAB43448.1"/>
    </source>
</evidence>
<keyword id="KW-0150">Chloroplast</keyword>
<keyword id="KW-0507">mRNA processing</keyword>
<keyword id="KW-0934">Plastid</keyword>
<keyword id="KW-1185">Reference proteome</keyword>
<keyword id="KW-0677">Repeat</keyword>
<keyword id="KW-0687">Ribonucleoprotein</keyword>
<keyword id="KW-0694">RNA-binding</keyword>
<keyword id="KW-0809">Transit peptide</keyword>
<feature type="transit peptide" description="Chloroplast" evidence="1">
    <location>
        <begin position="1"/>
        <end position="69"/>
    </location>
</feature>
<feature type="chain" id="PRO_0000431492" description="RNA-binding protein CP33, chloroplastic" evidence="1">
    <location>
        <begin position="70"/>
        <end position="329"/>
    </location>
</feature>
<feature type="domain" description="RRM 1" evidence="2">
    <location>
        <begin position="116"/>
        <end position="194"/>
    </location>
</feature>
<feature type="domain" description="RRM 2" evidence="2">
    <location>
        <begin position="219"/>
        <end position="297"/>
    </location>
</feature>
<feature type="region of interest" description="Disordered" evidence="3">
    <location>
        <begin position="77"/>
        <end position="117"/>
    </location>
</feature>
<feature type="region of interest" description="Disordered" evidence="3">
    <location>
        <begin position="296"/>
        <end position="329"/>
    </location>
</feature>
<feature type="compositionally biased region" description="Acidic residues" evidence="3">
    <location>
        <begin position="77"/>
        <end position="104"/>
    </location>
</feature>
<feature type="sequence conflict" description="In Ref. 1; BAA06523." evidence="5" ref="1">
    <original>G</original>
    <variation>W</variation>
    <location>
        <position position="116"/>
    </location>
</feature>
<feature type="sequence conflict" description="In Ref. 4; AAL32533." evidence="5" ref="4">
    <original>E</original>
    <variation>G</variation>
    <location>
        <position position="172"/>
    </location>
</feature>
<feature type="sequence conflict" description="In Ref. 4; AAL32533." evidence="5" ref="4">
    <original>N</original>
    <variation>D</variation>
    <location>
        <position position="229"/>
    </location>
</feature>
<accession>Q39061</accession>
<accession>Q39062</accession>
<accession>Q8W4N7</accession>
<sequence>MSSAYCSSAVAVSAAATASSAATFNPLLSSHSNSQLFYRFTPKSFKLVANCPNPLILHSNIRRHRFFCAAETEASSADDEIQASVEEEEEVEEEGDEGEEEVEEEKQTTQASGEEGRLYVGNLPYTITSSELSQIFGEAGTVVDVQIVYDKVTDRSRGFGFVTMGSIEEAKEAMQMFNSSQIGGRTVKVNFPEVPRGGENEVMRTKIRDNNRSYVDSPHKVYAGNLGWNLTSQGLKDAFGDQPGVLGAKVIYERNTGRSRGFGFISFESAENVQSALATMNGVEVEGRALRLNLASEREKPTVSPPSVEEGETEEASLESNEVLSNVSA</sequence>
<protein>
    <recommendedName>
        <fullName evidence="5">RNA-binding protein CP33, chloroplastic</fullName>
    </recommendedName>
    <alternativeName>
        <fullName>Protein PIGMENT DEFECTIVE 322</fullName>
    </alternativeName>
</protein>
<dbReference type="EMBL" id="D31714">
    <property type="protein sequence ID" value="BAA06522.1"/>
    <property type="molecule type" value="Genomic_DNA"/>
</dbReference>
<dbReference type="EMBL" id="D31715">
    <property type="protein sequence ID" value="BAA06523.1"/>
    <property type="molecule type" value="mRNA"/>
</dbReference>
<dbReference type="EMBL" id="AL050300">
    <property type="protein sequence ID" value="CAB43448.1"/>
    <property type="molecule type" value="Genomic_DNA"/>
</dbReference>
<dbReference type="EMBL" id="CP002686">
    <property type="protein sequence ID" value="AEE78940.1"/>
    <property type="molecule type" value="Genomic_DNA"/>
</dbReference>
<dbReference type="EMBL" id="AY039607">
    <property type="protein sequence ID" value="AAK62662.1"/>
    <property type="molecule type" value="mRNA"/>
</dbReference>
<dbReference type="EMBL" id="AY062455">
    <property type="protein sequence ID" value="AAL32533.1"/>
    <property type="molecule type" value="mRNA"/>
</dbReference>
<dbReference type="EMBL" id="AY078022">
    <property type="protein sequence ID" value="AAL77723.1"/>
    <property type="molecule type" value="mRNA"/>
</dbReference>
<dbReference type="EMBL" id="AY085279">
    <property type="protein sequence ID" value="AAM62511.1"/>
    <property type="molecule type" value="mRNA"/>
</dbReference>
<dbReference type="PIR" id="S53494">
    <property type="entry name" value="S53494"/>
</dbReference>
<dbReference type="RefSeq" id="NP_190806.1">
    <property type="nucleotide sequence ID" value="NM_115098.3"/>
</dbReference>
<dbReference type="SMR" id="Q39061"/>
<dbReference type="FunCoup" id="Q39061">
    <property type="interactions" value="1846"/>
</dbReference>
<dbReference type="STRING" id="3702.Q39061"/>
<dbReference type="PaxDb" id="3702-AT3G52380.1"/>
<dbReference type="ProteomicsDB" id="224377"/>
<dbReference type="EnsemblPlants" id="AT3G52380.1">
    <property type="protein sequence ID" value="AT3G52380.1"/>
    <property type="gene ID" value="AT3G52380"/>
</dbReference>
<dbReference type="GeneID" id="824403"/>
<dbReference type="Gramene" id="AT3G52380.1">
    <property type="protein sequence ID" value="AT3G52380.1"/>
    <property type="gene ID" value="AT3G52380"/>
</dbReference>
<dbReference type="KEGG" id="ath:AT3G52380"/>
<dbReference type="Araport" id="AT3G52380"/>
<dbReference type="TAIR" id="AT3G52380">
    <property type="gene designation" value="CP33"/>
</dbReference>
<dbReference type="eggNOG" id="KOG0118">
    <property type="taxonomic scope" value="Eukaryota"/>
</dbReference>
<dbReference type="HOGENOM" id="CLU_012062_15_1_1"/>
<dbReference type="InParanoid" id="Q39061"/>
<dbReference type="OMA" id="HRFFCAA"/>
<dbReference type="PhylomeDB" id="Q39061"/>
<dbReference type="CD-CODE" id="4299E36E">
    <property type="entry name" value="Nucleolus"/>
</dbReference>
<dbReference type="PRO" id="PR:Q39061"/>
<dbReference type="Proteomes" id="UP000006548">
    <property type="component" value="Chromosome 3"/>
</dbReference>
<dbReference type="ExpressionAtlas" id="Q39061">
    <property type="expression patterns" value="baseline and differential"/>
</dbReference>
<dbReference type="GO" id="GO:0009507">
    <property type="term" value="C:chloroplast"/>
    <property type="evidence" value="ECO:0000314"/>
    <property type="project" value="TAIR"/>
</dbReference>
<dbReference type="GO" id="GO:0009570">
    <property type="term" value="C:chloroplast stroma"/>
    <property type="evidence" value="ECO:0000314"/>
    <property type="project" value="TAIR"/>
</dbReference>
<dbReference type="GO" id="GO:0005829">
    <property type="term" value="C:cytosol"/>
    <property type="evidence" value="ECO:0007005"/>
    <property type="project" value="TAIR"/>
</dbReference>
<dbReference type="GO" id="GO:1990904">
    <property type="term" value="C:ribonucleoprotein complex"/>
    <property type="evidence" value="ECO:0007669"/>
    <property type="project" value="UniProtKB-KW"/>
</dbReference>
<dbReference type="GO" id="GO:0009579">
    <property type="term" value="C:thylakoid"/>
    <property type="evidence" value="ECO:0007005"/>
    <property type="project" value="TAIR"/>
</dbReference>
<dbReference type="GO" id="GO:0003729">
    <property type="term" value="F:mRNA binding"/>
    <property type="evidence" value="ECO:0000314"/>
    <property type="project" value="TAIR"/>
</dbReference>
<dbReference type="GO" id="GO:0003723">
    <property type="term" value="F:RNA binding"/>
    <property type="evidence" value="ECO:0000314"/>
    <property type="project" value="TAIR"/>
</dbReference>
<dbReference type="GO" id="GO:0031425">
    <property type="term" value="P:chloroplast RNA processing"/>
    <property type="evidence" value="ECO:0000315"/>
    <property type="project" value="TAIR"/>
</dbReference>
<dbReference type="GO" id="GO:1901259">
    <property type="term" value="P:chloroplast rRNA processing"/>
    <property type="evidence" value="ECO:0000315"/>
    <property type="project" value="TAIR"/>
</dbReference>
<dbReference type="GO" id="GO:0006397">
    <property type="term" value="P:mRNA processing"/>
    <property type="evidence" value="ECO:0007669"/>
    <property type="project" value="UniProtKB-KW"/>
</dbReference>
<dbReference type="CDD" id="cd21608">
    <property type="entry name" value="RRM2_NsCP33_like"/>
    <property type="match status" value="1"/>
</dbReference>
<dbReference type="FunFam" id="3.30.70.330:FF:000698">
    <property type="entry name" value="33 kDa ribonucleoprotein, chloroplastic"/>
    <property type="match status" value="1"/>
</dbReference>
<dbReference type="FunFam" id="3.30.70.330:FF:000760">
    <property type="entry name" value="33 kDa ribonucleoprotein, chloroplastic"/>
    <property type="match status" value="1"/>
</dbReference>
<dbReference type="Gene3D" id="3.30.70.330">
    <property type="match status" value="2"/>
</dbReference>
<dbReference type="InterPro" id="IPR050502">
    <property type="entry name" value="Euk_RNA-bind_prot"/>
</dbReference>
<dbReference type="InterPro" id="IPR012677">
    <property type="entry name" value="Nucleotide-bd_a/b_plait_sf"/>
</dbReference>
<dbReference type="InterPro" id="IPR035979">
    <property type="entry name" value="RBD_domain_sf"/>
</dbReference>
<dbReference type="InterPro" id="IPR048289">
    <property type="entry name" value="RRM2_NsCP33-like"/>
</dbReference>
<dbReference type="InterPro" id="IPR000504">
    <property type="entry name" value="RRM_dom"/>
</dbReference>
<dbReference type="PANTHER" id="PTHR48025">
    <property type="entry name" value="OS02G0815200 PROTEIN"/>
    <property type="match status" value="1"/>
</dbReference>
<dbReference type="PANTHER" id="PTHR48025:SF11">
    <property type="entry name" value="RNA-BINDING PROTEIN CP33, CHLOROPLASTIC"/>
    <property type="match status" value="1"/>
</dbReference>
<dbReference type="Pfam" id="PF00076">
    <property type="entry name" value="RRM_1"/>
    <property type="match status" value="2"/>
</dbReference>
<dbReference type="SMART" id="SM00360">
    <property type="entry name" value="RRM"/>
    <property type="match status" value="2"/>
</dbReference>
<dbReference type="SUPFAM" id="SSF54928">
    <property type="entry name" value="RNA-binding domain, RBD"/>
    <property type="match status" value="1"/>
</dbReference>
<dbReference type="PROSITE" id="PS50102">
    <property type="entry name" value="RRM"/>
    <property type="match status" value="2"/>
</dbReference>
<name>CP33_ARATH</name>